<evidence type="ECO:0000255" key="1">
    <source>
        <dbReference type="HAMAP-Rule" id="MF_00014"/>
    </source>
</evidence>
<comment type="function">
    <text evidence="1">An accessory protein needed during the final step in the assembly of 30S ribosomal subunit, possibly for assembly of the head region. Essential for efficient processing of 16S rRNA. May be needed both before and after RbfA during the maturation of 16S rRNA. It has affinity for free ribosomal 30S subunits but not for 70S ribosomes.</text>
</comment>
<comment type="subunit">
    <text evidence="1">Binds ribosomal protein uS19.</text>
</comment>
<comment type="subcellular location">
    <subcellularLocation>
        <location evidence="1">Cytoplasm</location>
    </subcellularLocation>
</comment>
<comment type="domain">
    <text evidence="1">The PRC barrel domain binds ribosomal protein uS19.</text>
</comment>
<comment type="similarity">
    <text evidence="1">Belongs to the RimM family.</text>
</comment>
<feature type="chain" id="PRO_0000244173" description="Ribosome maturation factor RimM">
    <location>
        <begin position="1"/>
        <end position="168"/>
    </location>
</feature>
<feature type="domain" description="PRC barrel" evidence="1">
    <location>
        <begin position="95"/>
        <end position="166"/>
    </location>
</feature>
<keyword id="KW-0143">Chaperone</keyword>
<keyword id="KW-0963">Cytoplasm</keyword>
<keyword id="KW-1185">Reference proteome</keyword>
<keyword id="KW-0690">Ribosome biogenesis</keyword>
<keyword id="KW-0698">rRNA processing</keyword>
<reference key="1">
    <citation type="journal article" date="2005" name="Proc. Natl. Acad. Sci. U.S.A.">
        <title>Whole genome sequence of Staphylococcus saprophyticus reveals the pathogenesis of uncomplicated urinary tract infection.</title>
        <authorList>
            <person name="Kuroda M."/>
            <person name="Yamashita A."/>
            <person name="Hirakawa H."/>
            <person name="Kumano M."/>
            <person name="Morikawa K."/>
            <person name="Higashide M."/>
            <person name="Maruyama A."/>
            <person name="Inose Y."/>
            <person name="Matoba K."/>
            <person name="Toh H."/>
            <person name="Kuhara S."/>
            <person name="Hattori M."/>
            <person name="Ohta T."/>
        </authorList>
    </citation>
    <scope>NUCLEOTIDE SEQUENCE [LARGE SCALE GENOMIC DNA]</scope>
    <source>
        <strain>ATCC 15305 / DSM 20229 / NCIMB 8711 / NCTC 7292 / S-41</strain>
    </source>
</reference>
<name>RIMM_STAS1</name>
<protein>
    <recommendedName>
        <fullName evidence="1">Ribosome maturation factor RimM</fullName>
    </recommendedName>
</protein>
<organism>
    <name type="scientific">Staphylococcus saprophyticus subsp. saprophyticus (strain ATCC 15305 / DSM 20229 / NCIMB 8711 / NCTC 7292 / S-41)</name>
    <dbReference type="NCBI Taxonomy" id="342451"/>
    <lineage>
        <taxon>Bacteria</taxon>
        <taxon>Bacillati</taxon>
        <taxon>Bacillota</taxon>
        <taxon>Bacilli</taxon>
        <taxon>Bacillales</taxon>
        <taxon>Staphylococcaceae</taxon>
        <taxon>Staphylococcus</taxon>
    </lineage>
</organism>
<accession>Q49X25</accession>
<proteinExistence type="inferred from homology"/>
<dbReference type="EMBL" id="AP008934">
    <property type="protein sequence ID" value="BAE18673.1"/>
    <property type="molecule type" value="Genomic_DNA"/>
</dbReference>
<dbReference type="RefSeq" id="WP_002483483.1">
    <property type="nucleotide sequence ID" value="NZ_MTGA01000034.1"/>
</dbReference>
<dbReference type="SMR" id="Q49X25"/>
<dbReference type="DNASU" id="3615174"/>
<dbReference type="GeneID" id="66867740"/>
<dbReference type="KEGG" id="ssp:SSP1528"/>
<dbReference type="eggNOG" id="COG0806">
    <property type="taxonomic scope" value="Bacteria"/>
</dbReference>
<dbReference type="HOGENOM" id="CLU_077636_3_1_9"/>
<dbReference type="OrthoDB" id="9810331at2"/>
<dbReference type="Proteomes" id="UP000006371">
    <property type="component" value="Chromosome"/>
</dbReference>
<dbReference type="GO" id="GO:0005737">
    <property type="term" value="C:cytoplasm"/>
    <property type="evidence" value="ECO:0007669"/>
    <property type="project" value="UniProtKB-SubCell"/>
</dbReference>
<dbReference type="GO" id="GO:0005840">
    <property type="term" value="C:ribosome"/>
    <property type="evidence" value="ECO:0007669"/>
    <property type="project" value="InterPro"/>
</dbReference>
<dbReference type="GO" id="GO:0043022">
    <property type="term" value="F:ribosome binding"/>
    <property type="evidence" value="ECO:0007669"/>
    <property type="project" value="InterPro"/>
</dbReference>
<dbReference type="GO" id="GO:0042274">
    <property type="term" value="P:ribosomal small subunit biogenesis"/>
    <property type="evidence" value="ECO:0007669"/>
    <property type="project" value="UniProtKB-UniRule"/>
</dbReference>
<dbReference type="GO" id="GO:0006364">
    <property type="term" value="P:rRNA processing"/>
    <property type="evidence" value="ECO:0007669"/>
    <property type="project" value="UniProtKB-UniRule"/>
</dbReference>
<dbReference type="Gene3D" id="2.30.30.240">
    <property type="entry name" value="PRC-barrel domain"/>
    <property type="match status" value="1"/>
</dbReference>
<dbReference type="Gene3D" id="2.40.30.60">
    <property type="entry name" value="RimM"/>
    <property type="match status" value="1"/>
</dbReference>
<dbReference type="HAMAP" id="MF_00014">
    <property type="entry name" value="Ribosome_mat_RimM"/>
    <property type="match status" value="1"/>
</dbReference>
<dbReference type="InterPro" id="IPR011033">
    <property type="entry name" value="PRC_barrel-like_sf"/>
</dbReference>
<dbReference type="InterPro" id="IPR056792">
    <property type="entry name" value="PRC_RimM"/>
</dbReference>
<dbReference type="InterPro" id="IPR011961">
    <property type="entry name" value="RimM"/>
</dbReference>
<dbReference type="InterPro" id="IPR002676">
    <property type="entry name" value="RimM_N"/>
</dbReference>
<dbReference type="InterPro" id="IPR036976">
    <property type="entry name" value="RimM_N_sf"/>
</dbReference>
<dbReference type="InterPro" id="IPR009000">
    <property type="entry name" value="Transl_B-barrel_sf"/>
</dbReference>
<dbReference type="NCBIfam" id="TIGR02273">
    <property type="entry name" value="16S_RimM"/>
    <property type="match status" value="1"/>
</dbReference>
<dbReference type="PANTHER" id="PTHR33692">
    <property type="entry name" value="RIBOSOME MATURATION FACTOR RIMM"/>
    <property type="match status" value="1"/>
</dbReference>
<dbReference type="PANTHER" id="PTHR33692:SF1">
    <property type="entry name" value="RIBOSOME MATURATION FACTOR RIMM"/>
    <property type="match status" value="1"/>
</dbReference>
<dbReference type="Pfam" id="PF24986">
    <property type="entry name" value="PRC_RimM"/>
    <property type="match status" value="1"/>
</dbReference>
<dbReference type="Pfam" id="PF01782">
    <property type="entry name" value="RimM"/>
    <property type="match status" value="1"/>
</dbReference>
<dbReference type="SUPFAM" id="SSF50346">
    <property type="entry name" value="PRC-barrel domain"/>
    <property type="match status" value="1"/>
</dbReference>
<dbReference type="SUPFAM" id="SSF50447">
    <property type="entry name" value="Translation proteins"/>
    <property type="match status" value="1"/>
</dbReference>
<gene>
    <name evidence="1" type="primary">rimM</name>
    <name type="ordered locus">SSP1528</name>
</gene>
<sequence>MKVEIGKIVNTHGIKGEIKVKSNSDFTETRFQPGELVIIERKNKEPLEFTIASYRMHKGLHMLTFEGINNINDIEYLKGETIMQERDHEEIELGEHEFYYSDIIGCTVFDDDDTPIGRVTEIFETGANDVWVVKGDKEYLIPYIADVVKDIDVEGRRIQITPMEGLLD</sequence>